<protein>
    <recommendedName>
        <fullName>General odorant-binding protein 2</fullName>
        <shortName>GOBP 2</shortName>
    </recommendedName>
</protein>
<comment type="function">
    <text evidence="1">Present in the aqueous fluid surrounding olfactory sensory dendrites and are thought to aid in the capture and transport of hydrophobic odorants into and through this fluid.</text>
</comment>
<comment type="tissue specificity">
    <text>Antenna.</text>
</comment>
<comment type="similarity">
    <text evidence="3">Belongs to the PBP/GOBP family.</text>
</comment>
<evidence type="ECO:0000250" key="1"/>
<evidence type="ECO:0000255" key="2"/>
<evidence type="ECO:0000305" key="3"/>
<keyword id="KW-1015">Disulfide bond</keyword>
<keyword id="KW-0552">Olfaction</keyword>
<keyword id="KW-0716">Sensory transduction</keyword>
<keyword id="KW-0732">Signal</keyword>
<keyword id="KW-0813">Transport</keyword>
<proteinExistence type="evidence at transcript level"/>
<dbReference type="EMBL" id="X96863">
    <property type="protein sequence ID" value="CAA65606.1"/>
    <property type="molecule type" value="mRNA"/>
</dbReference>
<dbReference type="PIR" id="B56584">
    <property type="entry name" value="B56584"/>
</dbReference>
<dbReference type="SMR" id="Q27288"/>
<dbReference type="GO" id="GO:0005549">
    <property type="term" value="F:odorant binding"/>
    <property type="evidence" value="ECO:0007669"/>
    <property type="project" value="InterPro"/>
</dbReference>
<dbReference type="GO" id="GO:0007608">
    <property type="term" value="P:sensory perception of smell"/>
    <property type="evidence" value="ECO:0007669"/>
    <property type="project" value="UniProtKB-KW"/>
</dbReference>
<dbReference type="CDD" id="cd23992">
    <property type="entry name" value="PBP_GOBP"/>
    <property type="match status" value="1"/>
</dbReference>
<dbReference type="Gene3D" id="1.10.238.20">
    <property type="entry name" value="Pheromone/general odorant binding protein domain"/>
    <property type="match status" value="1"/>
</dbReference>
<dbReference type="InterPro" id="IPR006072">
    <property type="entry name" value="Odorant/phero-bd_Lep"/>
</dbReference>
<dbReference type="InterPro" id="IPR006170">
    <property type="entry name" value="PBP/GOBP"/>
</dbReference>
<dbReference type="InterPro" id="IPR036728">
    <property type="entry name" value="PBP_GOBP_sf"/>
</dbReference>
<dbReference type="Pfam" id="PF01395">
    <property type="entry name" value="PBP_GOBP"/>
    <property type="match status" value="1"/>
</dbReference>
<dbReference type="PIRSF" id="PIRSF015604">
    <property type="entry name" value="Odorant/phero_bd"/>
    <property type="match status" value="1"/>
</dbReference>
<dbReference type="PRINTS" id="PR00484">
    <property type="entry name" value="PBPGOBP"/>
</dbReference>
<dbReference type="SMART" id="SM00708">
    <property type="entry name" value="PhBP"/>
    <property type="match status" value="1"/>
</dbReference>
<dbReference type="SUPFAM" id="SSF47565">
    <property type="entry name" value="Insect pheromone/odorant-binding proteins"/>
    <property type="match status" value="1"/>
</dbReference>
<organism>
    <name type="scientific">Heliothis virescens</name>
    <name type="common">Tobacco budworm moth</name>
    <dbReference type="NCBI Taxonomy" id="7102"/>
    <lineage>
        <taxon>Eukaryota</taxon>
        <taxon>Metazoa</taxon>
        <taxon>Ecdysozoa</taxon>
        <taxon>Arthropoda</taxon>
        <taxon>Hexapoda</taxon>
        <taxon>Insecta</taxon>
        <taxon>Pterygota</taxon>
        <taxon>Neoptera</taxon>
        <taxon>Endopterygota</taxon>
        <taxon>Lepidoptera</taxon>
        <taxon>Glossata</taxon>
        <taxon>Ditrysia</taxon>
        <taxon>Noctuoidea</taxon>
        <taxon>Noctuidae</taxon>
        <taxon>Heliothinae</taxon>
        <taxon>Heliothis</taxon>
    </lineage>
</organism>
<feature type="signal peptide" evidence="2">
    <location>
        <begin position="1"/>
        <end position="18"/>
    </location>
</feature>
<feature type="chain" id="PRO_0000012583" description="General odorant-binding protein 2">
    <location>
        <begin position="19"/>
        <end position="162"/>
    </location>
</feature>
<feature type="disulfide bond" evidence="1">
    <location>
        <begin position="40"/>
        <end position="75"/>
    </location>
</feature>
<feature type="disulfide bond" evidence="1">
    <location>
        <begin position="71"/>
        <end position="129"/>
    </location>
</feature>
<feature type="disulfide bond" evidence="1">
    <location>
        <begin position="118"/>
        <end position="138"/>
    </location>
</feature>
<sequence>MTSKSCLLLVAMVTLTTSVMGTAEVMSHVTAHFGKALEECREESGLSAEVLEEFQHFWREDFEVVHRELGCAIICMSNKFSLLQDDSRMHHVNMHDYVKSFPNGHVLSEKLVELIHNCEKKYDTMTDDCDRVVKVAACFKVDAKAAGIAPEVTMIEAVMEKY</sequence>
<name>OBP2_HELVI</name>
<accession>Q27288</accession>
<reference key="1">
    <citation type="journal article" date="1993" name="Insect Biochem. Mol. Biol.">
        <title>Odorant binding proteins of Heliothis virescens.</title>
        <authorList>
            <person name="Krieger J."/>
            <person name="Ganssle H."/>
            <person name="Raming K."/>
            <person name="Breer H."/>
        </authorList>
    </citation>
    <scope>NUCLEOTIDE SEQUENCE [MRNA]</scope>
    <source>
        <tissue>Antenna</tissue>
    </source>
</reference>